<feature type="chain" id="PRO_0000308149" description="Large ribosomal subunit protein uL1">
    <location>
        <begin position="1"/>
        <end position="212"/>
    </location>
</feature>
<comment type="function">
    <text evidence="1">Binds directly to 23S rRNA. Probably involved in E site tRNA release.</text>
</comment>
<comment type="function">
    <text evidence="1">Protein L1 is also a translational repressor protein, it controls the translation of its operon by binding to its mRNA.</text>
</comment>
<comment type="subunit">
    <text evidence="1">Part of the 50S ribosomal subunit.</text>
</comment>
<comment type="similarity">
    <text evidence="1">Belongs to the universal ribosomal protein uL1 family.</text>
</comment>
<keyword id="KW-1185">Reference proteome</keyword>
<keyword id="KW-0678">Repressor</keyword>
<keyword id="KW-0687">Ribonucleoprotein</keyword>
<keyword id="KW-0689">Ribosomal protein</keyword>
<keyword id="KW-0694">RNA-binding</keyword>
<keyword id="KW-0699">rRNA-binding</keyword>
<keyword id="KW-0810">Translation regulation</keyword>
<keyword id="KW-0820">tRNA-binding</keyword>
<name>RL1_METTP</name>
<protein>
    <recommendedName>
        <fullName evidence="1">Large ribosomal subunit protein uL1</fullName>
    </recommendedName>
    <alternativeName>
        <fullName evidence="2">50S ribosomal protein L1</fullName>
    </alternativeName>
</protein>
<dbReference type="EMBL" id="CP000477">
    <property type="protein sequence ID" value="ABK15196.1"/>
    <property type="molecule type" value="Genomic_DNA"/>
</dbReference>
<dbReference type="RefSeq" id="WP_011696588.1">
    <property type="nucleotide sequence ID" value="NC_008553.1"/>
</dbReference>
<dbReference type="SMR" id="A0B922"/>
<dbReference type="STRING" id="349307.Mthe_1421"/>
<dbReference type="GeneID" id="4463226"/>
<dbReference type="KEGG" id="mtp:Mthe_1421"/>
<dbReference type="HOGENOM" id="CLU_062853_4_0_2"/>
<dbReference type="OrthoDB" id="10382at2157"/>
<dbReference type="Proteomes" id="UP000000674">
    <property type="component" value="Chromosome"/>
</dbReference>
<dbReference type="GO" id="GO:0015934">
    <property type="term" value="C:large ribosomal subunit"/>
    <property type="evidence" value="ECO:0007669"/>
    <property type="project" value="InterPro"/>
</dbReference>
<dbReference type="GO" id="GO:0019843">
    <property type="term" value="F:rRNA binding"/>
    <property type="evidence" value="ECO:0007669"/>
    <property type="project" value="UniProtKB-UniRule"/>
</dbReference>
<dbReference type="GO" id="GO:0003735">
    <property type="term" value="F:structural constituent of ribosome"/>
    <property type="evidence" value="ECO:0007669"/>
    <property type="project" value="InterPro"/>
</dbReference>
<dbReference type="GO" id="GO:0000049">
    <property type="term" value="F:tRNA binding"/>
    <property type="evidence" value="ECO:0007669"/>
    <property type="project" value="UniProtKB-KW"/>
</dbReference>
<dbReference type="GO" id="GO:0006417">
    <property type="term" value="P:regulation of translation"/>
    <property type="evidence" value="ECO:0007669"/>
    <property type="project" value="UniProtKB-KW"/>
</dbReference>
<dbReference type="GO" id="GO:0006412">
    <property type="term" value="P:translation"/>
    <property type="evidence" value="ECO:0007669"/>
    <property type="project" value="UniProtKB-UniRule"/>
</dbReference>
<dbReference type="CDD" id="cd00403">
    <property type="entry name" value="Ribosomal_L1"/>
    <property type="match status" value="1"/>
</dbReference>
<dbReference type="FunFam" id="3.40.50.790:FF:000005">
    <property type="entry name" value="50S ribosomal protein L1"/>
    <property type="match status" value="1"/>
</dbReference>
<dbReference type="Gene3D" id="3.30.190.20">
    <property type="match status" value="1"/>
</dbReference>
<dbReference type="Gene3D" id="3.40.50.790">
    <property type="match status" value="1"/>
</dbReference>
<dbReference type="HAMAP" id="MF_01318_A">
    <property type="entry name" value="Ribosomal_uL1_A"/>
    <property type="match status" value="1"/>
</dbReference>
<dbReference type="InterPro" id="IPR002143">
    <property type="entry name" value="Ribosomal_uL1"/>
</dbReference>
<dbReference type="InterPro" id="IPR023674">
    <property type="entry name" value="Ribosomal_uL1-like"/>
</dbReference>
<dbReference type="InterPro" id="IPR028364">
    <property type="entry name" value="Ribosomal_uL1/biogenesis"/>
</dbReference>
<dbReference type="InterPro" id="IPR016095">
    <property type="entry name" value="Ribosomal_uL1_3-a/b-sand"/>
</dbReference>
<dbReference type="InterPro" id="IPR023669">
    <property type="entry name" value="Ribosomal_uL1_arc"/>
</dbReference>
<dbReference type="InterPro" id="IPR023673">
    <property type="entry name" value="Ribosomal_uL1_CS"/>
</dbReference>
<dbReference type="NCBIfam" id="NF003244">
    <property type="entry name" value="PRK04203.1"/>
    <property type="match status" value="1"/>
</dbReference>
<dbReference type="PANTHER" id="PTHR36427">
    <property type="entry name" value="54S RIBOSOMAL PROTEIN L1, MITOCHONDRIAL"/>
    <property type="match status" value="1"/>
</dbReference>
<dbReference type="PANTHER" id="PTHR36427:SF3">
    <property type="entry name" value="LARGE RIBOSOMAL SUBUNIT PROTEIN UL1M"/>
    <property type="match status" value="1"/>
</dbReference>
<dbReference type="Pfam" id="PF00687">
    <property type="entry name" value="Ribosomal_L1"/>
    <property type="match status" value="1"/>
</dbReference>
<dbReference type="PIRSF" id="PIRSF002155">
    <property type="entry name" value="Ribosomal_L1"/>
    <property type="match status" value="1"/>
</dbReference>
<dbReference type="SUPFAM" id="SSF56808">
    <property type="entry name" value="Ribosomal protein L1"/>
    <property type="match status" value="1"/>
</dbReference>
<dbReference type="PROSITE" id="PS01199">
    <property type="entry name" value="RIBOSOMAL_L1"/>
    <property type="match status" value="1"/>
</dbReference>
<organism>
    <name type="scientific">Methanothrix thermoacetophila (strain DSM 6194 / JCM 14653 / NBRC 101360 / PT)</name>
    <name type="common">Methanosaeta thermophila</name>
    <dbReference type="NCBI Taxonomy" id="349307"/>
    <lineage>
        <taxon>Archaea</taxon>
        <taxon>Methanobacteriati</taxon>
        <taxon>Methanobacteriota</taxon>
        <taxon>Stenosarchaea group</taxon>
        <taxon>Methanomicrobia</taxon>
        <taxon>Methanotrichales</taxon>
        <taxon>Methanotrichaceae</taxon>
        <taxon>Methanothrix</taxon>
    </lineage>
</organism>
<proteinExistence type="inferred from homology"/>
<sequence>MKENIEEAVKKAVSEAPPRGFKESVDLAINLHNIDLTQPGNRVDTEVILPHGRGRPNRIAVFAAGDTALKAKAAGADYVISPEELKLLGENRKNARKLADEYDFFIAETQFMPVIGKTLGPILGKRGKMPTPLPPNADVAQMISRLKNIVRIRSRDRPTFHIAVGRRDMDARQLAENIESVITKLEQTLKDGRRNLKSVYVKTTMGPAVRVI</sequence>
<gene>
    <name evidence="1" type="primary">rpl1</name>
    <name type="ordered locus">Mthe_1421</name>
</gene>
<evidence type="ECO:0000255" key="1">
    <source>
        <dbReference type="HAMAP-Rule" id="MF_01318"/>
    </source>
</evidence>
<evidence type="ECO:0000305" key="2"/>
<reference key="1">
    <citation type="submission" date="2006-10" db="EMBL/GenBank/DDBJ databases">
        <title>Complete sequence of Methanosaeta thermophila PT.</title>
        <authorList>
            <consortium name="US DOE Joint Genome Institute"/>
            <person name="Copeland A."/>
            <person name="Lucas S."/>
            <person name="Lapidus A."/>
            <person name="Barry K."/>
            <person name="Detter J.C."/>
            <person name="Glavina del Rio T."/>
            <person name="Hammon N."/>
            <person name="Israni S."/>
            <person name="Pitluck S."/>
            <person name="Chain P."/>
            <person name="Malfatti S."/>
            <person name="Shin M."/>
            <person name="Vergez L."/>
            <person name="Schmutz J."/>
            <person name="Larimer F."/>
            <person name="Land M."/>
            <person name="Hauser L."/>
            <person name="Kyrpides N."/>
            <person name="Kim E."/>
            <person name="Smith K.S."/>
            <person name="Ingram-Smith C."/>
            <person name="Richardson P."/>
        </authorList>
    </citation>
    <scope>NUCLEOTIDE SEQUENCE [LARGE SCALE GENOMIC DNA]</scope>
    <source>
        <strain>DSM 6194 / JCM 14653 / NBRC 101360 / PT</strain>
    </source>
</reference>
<accession>A0B922</accession>